<evidence type="ECO:0000255" key="1">
    <source>
        <dbReference type="PROSITE-ProRule" id="PRU00021"/>
    </source>
</evidence>
<evidence type="ECO:0000269" key="2">
    <source>
    </source>
</evidence>
<evidence type="ECO:0000305" key="3"/>
<evidence type="ECO:0007829" key="4">
    <source>
        <dbReference type="PDB" id="1HG7"/>
    </source>
</evidence>
<name>ANP12_ZOAAM</name>
<feature type="chain" id="PRO_0000155160" description="Type-3 ice-structuring protein HPLC 12">
    <location>
        <begin position="1"/>
        <end position="66"/>
    </location>
</feature>
<feature type="domain" description="AFP-like" evidence="1">
    <location>
        <begin position="4"/>
        <end position="63"/>
    </location>
</feature>
<feature type="site" description="Important for ice-binding">
    <location>
        <position position="9"/>
    </location>
</feature>
<feature type="site" description="Important for ice-binding">
    <location>
        <position position="14"/>
    </location>
</feature>
<feature type="site" description="Important for ice-binding">
    <location>
        <position position="18"/>
    </location>
</feature>
<feature type="site" description="Important for ice-binding">
    <location>
        <position position="44"/>
    </location>
</feature>
<feature type="strand" evidence="4">
    <location>
        <begin position="4"/>
        <end position="9"/>
    </location>
</feature>
<feature type="helix" evidence="4">
    <location>
        <begin position="19"/>
        <end position="21"/>
    </location>
</feature>
<feature type="strand" evidence="4">
    <location>
        <begin position="22"/>
        <end position="25"/>
    </location>
</feature>
<feature type="helix" evidence="4">
    <location>
        <begin position="34"/>
        <end position="36"/>
    </location>
</feature>
<feature type="helix" evidence="4">
    <location>
        <begin position="37"/>
        <end position="40"/>
    </location>
</feature>
<feature type="strand" evidence="4">
    <location>
        <begin position="44"/>
        <end position="47"/>
    </location>
</feature>
<feature type="helix" evidence="4">
    <location>
        <begin position="57"/>
        <end position="59"/>
    </location>
</feature>
<accession>P19614</accession>
<proteinExistence type="evidence at protein level"/>
<dbReference type="PIR" id="A30839">
    <property type="entry name" value="A30839"/>
</dbReference>
<dbReference type="PDB" id="1AME">
    <property type="method" value="X-ray"/>
    <property type="resolution" value="1.65 A"/>
    <property type="chains" value="A=1-63"/>
</dbReference>
<dbReference type="PDB" id="1B7I">
    <property type="method" value="X-ray"/>
    <property type="resolution" value="1.65 A"/>
    <property type="chains" value="A=1-65"/>
</dbReference>
<dbReference type="PDB" id="1B7J">
    <property type="method" value="X-ray"/>
    <property type="resolution" value="1.65 A"/>
    <property type="chains" value="A=1-63"/>
</dbReference>
<dbReference type="PDB" id="1B7K">
    <property type="method" value="X-ray"/>
    <property type="resolution" value="2.50 A"/>
    <property type="chains" value="A=1-63"/>
</dbReference>
<dbReference type="PDB" id="1EKL">
    <property type="method" value="X-ray"/>
    <property type="resolution" value="1.65 A"/>
    <property type="chains" value="A=1-63"/>
</dbReference>
<dbReference type="PDB" id="1GZI">
    <property type="method" value="X-ray"/>
    <property type="resolution" value="1.80 A"/>
    <property type="chains" value="A=1-63"/>
</dbReference>
<dbReference type="PDB" id="1HG7">
    <property type="method" value="X-ray"/>
    <property type="resolution" value="1.15 A"/>
    <property type="chains" value="A=1-63"/>
</dbReference>
<dbReference type="PDB" id="1JAB">
    <property type="method" value="X-ray"/>
    <property type="resolution" value="1.65 A"/>
    <property type="chains" value="A=1-63"/>
</dbReference>
<dbReference type="PDB" id="1KDE">
    <property type="method" value="NMR"/>
    <property type="chains" value="A=1-63"/>
</dbReference>
<dbReference type="PDB" id="1KDF">
    <property type="method" value="NMR"/>
    <property type="chains" value="A=1-63"/>
</dbReference>
<dbReference type="PDB" id="1MSI">
    <property type="method" value="X-ray"/>
    <property type="resolution" value="1.25 A"/>
    <property type="chains" value="A=2-63"/>
</dbReference>
<dbReference type="PDB" id="1MSJ">
    <property type="method" value="X-ray"/>
    <property type="resolution" value="2.30 A"/>
    <property type="chains" value="A=1-63"/>
</dbReference>
<dbReference type="PDB" id="2AME">
    <property type="method" value="X-ray"/>
    <property type="resolution" value="2.00 A"/>
    <property type="chains" value="A=1-63"/>
</dbReference>
<dbReference type="PDB" id="2JIA">
    <property type="method" value="X-ray"/>
    <property type="resolution" value="1.60 A"/>
    <property type="chains" value="A=1-65"/>
</dbReference>
<dbReference type="PDB" id="2MSI">
    <property type="method" value="X-ray"/>
    <property type="resolution" value="1.90 A"/>
    <property type="chains" value="A=2-63"/>
</dbReference>
<dbReference type="PDB" id="2MSJ">
    <property type="method" value="X-ray"/>
    <property type="resolution" value="1.90 A"/>
    <property type="chains" value="A=1-63"/>
</dbReference>
<dbReference type="PDB" id="2SPG">
    <property type="method" value="X-ray"/>
    <property type="resolution" value="1.75 A"/>
    <property type="chains" value="A=1-63"/>
</dbReference>
<dbReference type="PDB" id="3AME">
    <property type="method" value="X-ray"/>
    <property type="resolution" value="2.30 A"/>
    <property type="chains" value="A=1-63"/>
</dbReference>
<dbReference type="PDB" id="3MSI">
    <property type="method" value="X-ray"/>
    <property type="resolution" value="1.43 A"/>
    <property type="chains" value="A=2-63"/>
</dbReference>
<dbReference type="PDB" id="3QF6">
    <property type="method" value="Neutron"/>
    <property type="resolution" value="1.85 A"/>
    <property type="chains" value="A=1-66"/>
</dbReference>
<dbReference type="PDB" id="4AME">
    <property type="method" value="X-ray"/>
    <property type="resolution" value="2.05 A"/>
    <property type="chains" value="A=1-63"/>
</dbReference>
<dbReference type="PDB" id="4MSI">
    <property type="method" value="X-ray"/>
    <property type="resolution" value="1.60 A"/>
    <property type="chains" value="A=2-63"/>
</dbReference>
<dbReference type="PDB" id="4NY6">
    <property type="method" value="Other"/>
    <property type="resolution" value="1.85 A"/>
    <property type="chains" value="A=1-63"/>
</dbReference>
<dbReference type="PDB" id="5C7R">
    <property type="method" value="X-ray"/>
    <property type="resolution" value="1.94 A"/>
    <property type="chains" value="A/B=1-63"/>
</dbReference>
<dbReference type="PDB" id="5MSI">
    <property type="method" value="X-ray"/>
    <property type="resolution" value="1.60 A"/>
    <property type="chains" value="A=2-63"/>
</dbReference>
<dbReference type="PDB" id="6AME">
    <property type="method" value="X-ray"/>
    <property type="resolution" value="2.10 A"/>
    <property type="chains" value="A=1-63"/>
</dbReference>
<dbReference type="PDB" id="6MSI">
    <property type="method" value="X-ray"/>
    <property type="resolution" value="1.65 A"/>
    <property type="chains" value="A=2-63"/>
</dbReference>
<dbReference type="PDB" id="7AME">
    <property type="method" value="X-ray"/>
    <property type="resolution" value="1.70 A"/>
    <property type="chains" value="A=1-63"/>
</dbReference>
<dbReference type="PDB" id="7MSI">
    <property type="method" value="X-ray"/>
    <property type="resolution" value="1.70 A"/>
    <property type="chains" value="A=2-63"/>
</dbReference>
<dbReference type="PDB" id="7Q3V">
    <property type="method" value="X-ray"/>
    <property type="resolution" value="1.90 A"/>
    <property type="chains" value="A/B/C/D=2-63"/>
</dbReference>
<dbReference type="PDB" id="8AME">
    <property type="method" value="X-ray"/>
    <property type="resolution" value="1.90 A"/>
    <property type="chains" value="A=1-63"/>
</dbReference>
<dbReference type="PDB" id="8MSI">
    <property type="method" value="X-ray"/>
    <property type="resolution" value="2.60 A"/>
    <property type="chains" value="A=1-63"/>
</dbReference>
<dbReference type="PDB" id="9AME">
    <property type="method" value="X-ray"/>
    <property type="resolution" value="1.80 A"/>
    <property type="chains" value="A=1-63"/>
</dbReference>
<dbReference type="PDB" id="9CBE">
    <property type="method" value="X-ray"/>
    <property type="resolution" value="1.90 A"/>
    <property type="chains" value="A=1-63"/>
</dbReference>
<dbReference type="PDB" id="9MSI">
    <property type="method" value="X-ray"/>
    <property type="resolution" value="2.60 A"/>
    <property type="chains" value="A=1-63"/>
</dbReference>
<dbReference type="PDBsum" id="1AME"/>
<dbReference type="PDBsum" id="1B7I"/>
<dbReference type="PDBsum" id="1B7J"/>
<dbReference type="PDBsum" id="1B7K"/>
<dbReference type="PDBsum" id="1EKL"/>
<dbReference type="PDBsum" id="1GZI"/>
<dbReference type="PDBsum" id="1HG7"/>
<dbReference type="PDBsum" id="1JAB"/>
<dbReference type="PDBsum" id="1KDE"/>
<dbReference type="PDBsum" id="1KDF"/>
<dbReference type="PDBsum" id="1MSI"/>
<dbReference type="PDBsum" id="1MSJ"/>
<dbReference type="PDBsum" id="2AME"/>
<dbReference type="PDBsum" id="2JIA"/>
<dbReference type="PDBsum" id="2MSI"/>
<dbReference type="PDBsum" id="2MSJ"/>
<dbReference type="PDBsum" id="2SPG"/>
<dbReference type="PDBsum" id="3AME"/>
<dbReference type="PDBsum" id="3MSI"/>
<dbReference type="PDBsum" id="3QF6"/>
<dbReference type="PDBsum" id="4AME"/>
<dbReference type="PDBsum" id="4MSI"/>
<dbReference type="PDBsum" id="4NY6"/>
<dbReference type="PDBsum" id="5C7R"/>
<dbReference type="PDBsum" id="5MSI"/>
<dbReference type="PDBsum" id="6AME"/>
<dbReference type="PDBsum" id="6MSI"/>
<dbReference type="PDBsum" id="7AME"/>
<dbReference type="PDBsum" id="7MSI"/>
<dbReference type="PDBsum" id="7Q3V"/>
<dbReference type="PDBsum" id="8AME"/>
<dbReference type="PDBsum" id="8MSI"/>
<dbReference type="PDBsum" id="9AME"/>
<dbReference type="PDBsum" id="9CBE"/>
<dbReference type="PDBsum" id="9MSI"/>
<dbReference type="BMRB" id="P19614"/>
<dbReference type="SMR" id="P19614"/>
<dbReference type="EvolutionaryTrace" id="P19614"/>
<dbReference type="GO" id="GO:0005576">
    <property type="term" value="C:extracellular region"/>
    <property type="evidence" value="ECO:0007669"/>
    <property type="project" value="UniProtKB-SubCell"/>
</dbReference>
<dbReference type="CDD" id="cd11617">
    <property type="entry name" value="Antifreeze_III"/>
    <property type="match status" value="1"/>
</dbReference>
<dbReference type="Gene3D" id="3.90.1210.10">
    <property type="entry name" value="Antifreeze-like/N-acetylneuraminic acid synthase C-terminal domain"/>
    <property type="match status" value="1"/>
</dbReference>
<dbReference type="InterPro" id="IPR006190">
    <property type="entry name" value="AFP_Neu5c_C"/>
</dbReference>
<dbReference type="InterPro" id="IPR036732">
    <property type="entry name" value="AFP_Neu5c_C_sf"/>
</dbReference>
<dbReference type="InterPro" id="IPR006013">
    <property type="entry name" value="Antifreeze_III"/>
</dbReference>
<dbReference type="PRINTS" id="PR00357">
    <property type="entry name" value="ANTIFREEZIII"/>
</dbReference>
<dbReference type="SUPFAM" id="SSF51269">
    <property type="entry name" value="AFP III-like domain"/>
    <property type="match status" value="1"/>
</dbReference>
<dbReference type="PROSITE" id="PS50844">
    <property type="entry name" value="AFP_LIKE"/>
    <property type="match status" value="1"/>
</dbReference>
<comment type="function">
    <text>Contributes to protect fish blood from freezing at subzero sea water temperatures. Lowers the blood freezing point. Binds to nascent ice crystals and prevents further growth.</text>
</comment>
<comment type="subcellular location">
    <subcellularLocation>
        <location evidence="2">Secreted</location>
    </subcellularLocation>
</comment>
<comment type="tissue specificity">
    <text evidence="2">Detected in blood serum (at protein level).</text>
</comment>
<comment type="similarity">
    <text evidence="3">Belongs to the type-III AFP family.</text>
</comment>
<keyword id="KW-0002">3D-structure</keyword>
<keyword id="KW-0047">Antifreeze protein</keyword>
<keyword id="KW-0903">Direct protein sequencing</keyword>
<keyword id="KW-0964">Secreted</keyword>
<organism>
    <name type="scientific">Zoarces americanus</name>
    <name type="common">Ocean pout</name>
    <name type="synonym">Macrozoarces americanus</name>
    <dbReference type="NCBI Taxonomy" id="8199"/>
    <lineage>
        <taxon>Eukaryota</taxon>
        <taxon>Metazoa</taxon>
        <taxon>Chordata</taxon>
        <taxon>Craniata</taxon>
        <taxon>Vertebrata</taxon>
        <taxon>Euteleostomi</taxon>
        <taxon>Actinopterygii</taxon>
        <taxon>Neopterygii</taxon>
        <taxon>Teleostei</taxon>
        <taxon>Neoteleostei</taxon>
        <taxon>Acanthomorphata</taxon>
        <taxon>Eupercaria</taxon>
        <taxon>Perciformes</taxon>
        <taxon>Cottioidei</taxon>
        <taxon>Zoarcales</taxon>
        <taxon>Zoarcidae</taxon>
        <taxon>Zoarcinae</taxon>
        <taxon>Zoarces</taxon>
    </lineage>
</organism>
<protein>
    <recommendedName>
        <fullName>Type-3 ice-structuring protein HPLC 12</fullName>
    </recommendedName>
    <alternativeName>
        <fullName>Antifreeze protein QAE(HPLC 12)</fullName>
    </alternativeName>
    <alternativeName>
        <fullName>ISP type III HPLC 12</fullName>
    </alternativeName>
</protein>
<reference key="1">
    <citation type="journal article" date="1988" name="J. Biol. Chem.">
        <title>Multiple genes provide the basis for antifreeze protein diversity and dosage in the ocean pout, Macrozoarces americanus.</title>
        <authorList>
            <person name="Hew C.-L."/>
            <person name="Wang N.-C."/>
            <person name="Joshi S."/>
            <person name="Fletcher G.L."/>
            <person name="Scott G.K."/>
            <person name="Hayes P.H."/>
            <person name="Buettner B."/>
            <person name="Davies P.L."/>
        </authorList>
    </citation>
    <scope>PROTEIN SEQUENCE</scope>
    <scope>SUBCELLULAR LOCATION</scope>
    <scope>TISSUE SPECIFICITY</scope>
</reference>
<reference key="2">
    <citation type="journal article" date="2002" name="Cryo Lett.">
        <title>Ice structuring proteins - a new name for antifreeze proteins.</title>
        <authorList>
            <person name="Clarke C.J."/>
            <person name="Buckley S.L."/>
            <person name="Lindner N."/>
        </authorList>
    </citation>
    <scope>NOMENCLATURE</scope>
</reference>
<reference key="3">
    <citation type="journal article" date="1996" name="Structure">
        <title>Refined solution structure of type III antifreeze protein: hydrophobic groups may be involved in the energetics of the protein-ice interaction.</title>
        <authorList>
            <person name="Soennichsen F.D."/>
            <person name="Deluca C.I."/>
            <person name="Davies P.L."/>
            <person name="Sykes B.D."/>
        </authorList>
    </citation>
    <scope>STRUCTURE BY NMR</scope>
</reference>
<reference key="4">
    <citation type="journal article" date="1996" name="Nature">
        <title>Structural basis for the binding of a globular antifreeze protein to ice.</title>
        <authorList>
            <person name="Jia Z."/>
            <person name="Deluca C.I."/>
            <person name="Chao H."/>
            <person name="Davies P.L."/>
        </authorList>
    </citation>
    <scope>X-RAY CRYSTALLOGRAPHY (1.25 ANGSTROMS)</scope>
</reference>
<reference key="5">
    <citation type="journal article" date="1998" name="J. Mol. Biol.">
        <title>The effects of steric mutations on the structure of type III antifreeze protein and its interaction with ice.</title>
        <authorList>
            <person name="Deluca C.I."/>
            <person name="Davies P.L."/>
            <person name="Ye Q."/>
            <person name="Jia Z."/>
        </authorList>
    </citation>
    <scope>X-RAY CRYSTALLOGRAPHY (1.25 ANGSTROMS) OF MUTANTS</scope>
</reference>
<reference key="6">
    <citation type="submission" date="1996-10" db="PDB data bank">
        <authorList>
            <person name="Antson A.A."/>
            <person name="Lewis S."/>
            <person name="Roper D.I."/>
            <person name="Smith D.J."/>
            <person name="Hubbard R.E."/>
        </authorList>
    </citation>
    <scope>X-RAY CRYSTALLOGRAPHY (1.8 ANGSTROMS)</scope>
</reference>
<reference key="7">
    <citation type="journal article" date="1999" name="J. Biol. Chem.">
        <title>Quantitative and qualitative analysis of type III antifreeze protein structure and function.</title>
        <authorList>
            <person name="Graether S.P."/>
            <person name="Deluca C.I."/>
            <person name="Baardsnes J."/>
            <person name="Hill G.A."/>
            <person name="Davies P.L."/>
            <person name="Jia Z."/>
        </authorList>
    </citation>
    <scope>X-RAY CRYSTALLOGRAPHY (1.65 ANGSTROMS)</scope>
</reference>
<reference key="8">
    <citation type="journal article" date="2001" name="J. Mol. Biol.">
        <title>Understanding the mechanism of ice binding by type III antifreeze proteins.</title>
        <authorList>
            <person name="Antson A.A."/>
            <person name="Smith D.J."/>
            <person name="Roper D.I."/>
            <person name="Lewis S."/>
            <person name="Caves L.S."/>
            <person name="Verma C.S."/>
            <person name="Buckley S.L."/>
            <person name="Lillford P.J."/>
            <person name="Hubbard R.E."/>
        </authorList>
    </citation>
    <scope>X-RAY CRYSTALLOGRAPHY (1.15 ANGSTROMS) OF 1-63</scope>
</reference>
<sequence length="66" mass="7027">NQASVVANQLIPINTALTLVMMRSEVVTPVGIPAEDIPRLVSMQVNRAVPLGTTLMPDMVKGYPPA</sequence>